<dbReference type="EC" id="4.1.1.37" evidence="1"/>
<dbReference type="EMBL" id="CP000557">
    <property type="protein sequence ID" value="ABO65951.1"/>
    <property type="molecule type" value="Genomic_DNA"/>
</dbReference>
<dbReference type="RefSeq" id="WP_011886872.1">
    <property type="nucleotide sequence ID" value="NC_009328.1"/>
</dbReference>
<dbReference type="SMR" id="A4IKU7"/>
<dbReference type="KEGG" id="gtn:GTNG_0569"/>
<dbReference type="eggNOG" id="COG0407">
    <property type="taxonomic scope" value="Bacteria"/>
</dbReference>
<dbReference type="HOGENOM" id="CLU_040933_0_1_9"/>
<dbReference type="UniPathway" id="UPA00251">
    <property type="reaction ID" value="UER00321"/>
</dbReference>
<dbReference type="Proteomes" id="UP000001578">
    <property type="component" value="Chromosome"/>
</dbReference>
<dbReference type="GO" id="GO:0005829">
    <property type="term" value="C:cytosol"/>
    <property type="evidence" value="ECO:0007669"/>
    <property type="project" value="TreeGrafter"/>
</dbReference>
<dbReference type="GO" id="GO:0004853">
    <property type="term" value="F:uroporphyrinogen decarboxylase activity"/>
    <property type="evidence" value="ECO:0007669"/>
    <property type="project" value="UniProtKB-UniRule"/>
</dbReference>
<dbReference type="GO" id="GO:0006782">
    <property type="term" value="P:protoporphyrinogen IX biosynthetic process"/>
    <property type="evidence" value="ECO:0007669"/>
    <property type="project" value="UniProtKB-UniRule"/>
</dbReference>
<dbReference type="CDD" id="cd00717">
    <property type="entry name" value="URO-D"/>
    <property type="match status" value="1"/>
</dbReference>
<dbReference type="FunFam" id="3.20.20.210:FF:000005">
    <property type="entry name" value="Uroporphyrinogen decarboxylase"/>
    <property type="match status" value="1"/>
</dbReference>
<dbReference type="Gene3D" id="3.20.20.210">
    <property type="match status" value="1"/>
</dbReference>
<dbReference type="HAMAP" id="MF_00218">
    <property type="entry name" value="URO_D"/>
    <property type="match status" value="1"/>
</dbReference>
<dbReference type="InterPro" id="IPR038071">
    <property type="entry name" value="UROD/MetE-like_sf"/>
</dbReference>
<dbReference type="InterPro" id="IPR006361">
    <property type="entry name" value="Uroporphyrinogen_deCO2ase_HemE"/>
</dbReference>
<dbReference type="InterPro" id="IPR000257">
    <property type="entry name" value="Uroporphyrinogen_deCOase"/>
</dbReference>
<dbReference type="NCBIfam" id="TIGR01464">
    <property type="entry name" value="hemE"/>
    <property type="match status" value="1"/>
</dbReference>
<dbReference type="PANTHER" id="PTHR21091">
    <property type="entry name" value="METHYLTETRAHYDROFOLATE:HOMOCYSTEINE METHYLTRANSFERASE RELATED"/>
    <property type="match status" value="1"/>
</dbReference>
<dbReference type="PANTHER" id="PTHR21091:SF169">
    <property type="entry name" value="UROPORPHYRINOGEN DECARBOXYLASE"/>
    <property type="match status" value="1"/>
</dbReference>
<dbReference type="Pfam" id="PF01208">
    <property type="entry name" value="URO-D"/>
    <property type="match status" value="1"/>
</dbReference>
<dbReference type="SUPFAM" id="SSF51726">
    <property type="entry name" value="UROD/MetE-like"/>
    <property type="match status" value="1"/>
</dbReference>
<dbReference type="PROSITE" id="PS00906">
    <property type="entry name" value="UROD_1"/>
    <property type="match status" value="1"/>
</dbReference>
<dbReference type="PROSITE" id="PS00907">
    <property type="entry name" value="UROD_2"/>
    <property type="match status" value="1"/>
</dbReference>
<protein>
    <recommendedName>
        <fullName evidence="1">Uroporphyrinogen decarboxylase</fullName>
        <shortName evidence="1">UPD</shortName>
        <shortName evidence="1">URO-D</shortName>
        <ecNumber evidence="1">4.1.1.37</ecNumber>
    </recommendedName>
</protein>
<feature type="chain" id="PRO_1000023908" description="Uroporphyrinogen decarboxylase">
    <location>
        <begin position="1"/>
        <end position="345"/>
    </location>
</feature>
<feature type="binding site" evidence="1">
    <location>
        <begin position="27"/>
        <end position="31"/>
    </location>
    <ligand>
        <name>substrate</name>
    </ligand>
</feature>
<feature type="binding site" evidence="1">
    <location>
        <position position="46"/>
    </location>
    <ligand>
        <name>substrate</name>
    </ligand>
</feature>
<feature type="binding site" evidence="1">
    <location>
        <position position="76"/>
    </location>
    <ligand>
        <name>substrate</name>
    </ligand>
</feature>
<feature type="binding site" evidence="1">
    <location>
        <position position="152"/>
    </location>
    <ligand>
        <name>substrate</name>
    </ligand>
</feature>
<feature type="binding site" evidence="1">
    <location>
        <position position="207"/>
    </location>
    <ligand>
        <name>substrate</name>
    </ligand>
</feature>
<feature type="binding site" evidence="1">
    <location>
        <position position="320"/>
    </location>
    <ligand>
        <name>substrate</name>
    </ligand>
</feature>
<feature type="site" description="Transition state stabilizer" evidence="1">
    <location>
        <position position="76"/>
    </location>
</feature>
<gene>
    <name evidence="1" type="primary">hemE</name>
    <name type="ordered locus">GTNG_0569</name>
</gene>
<sequence length="345" mass="38872">MTRRINDTFLRACRGEKTAYVPVWYMRQAGRSQPEYRALKEKYSLFEITHQPELCAYVTRLPVEQYGVDAAILYKDIMTPLPAIGVDVEIRGGVGPVIANPIRSLHDVERLGEIDPEHDVPYVLETIRLLVNEQLDVPLIGFAGAPFTLASYMIEGGPSKNYHKTKAFMYAEPKAWFALMDKLAEMTIRYVKAQIQAGASAVQIFDSWVGAVNADDYRTFIKPAMARIFAALREEGAPLIMFGVGASHLAHEWNDLPLDVIGLDWRLSIREARRRGITKAIQGNLDPAVLLAPWDVIEERVKRILDEGMEQPGYIFNLGHGIFPDVQPATLKRLTAFIHDYTSTK</sequence>
<proteinExistence type="inferred from homology"/>
<organism>
    <name type="scientific">Geobacillus thermodenitrificans (strain NG80-2)</name>
    <dbReference type="NCBI Taxonomy" id="420246"/>
    <lineage>
        <taxon>Bacteria</taxon>
        <taxon>Bacillati</taxon>
        <taxon>Bacillota</taxon>
        <taxon>Bacilli</taxon>
        <taxon>Bacillales</taxon>
        <taxon>Anoxybacillaceae</taxon>
        <taxon>Geobacillus</taxon>
    </lineage>
</organism>
<accession>A4IKU7</accession>
<reference key="1">
    <citation type="journal article" date="2007" name="Proc. Natl. Acad. Sci. U.S.A.">
        <title>Genome and proteome of long-chain alkane degrading Geobacillus thermodenitrificans NG80-2 isolated from a deep-subsurface oil reservoir.</title>
        <authorList>
            <person name="Feng L."/>
            <person name="Wang W."/>
            <person name="Cheng J."/>
            <person name="Ren Y."/>
            <person name="Zhao G."/>
            <person name="Gao C."/>
            <person name="Tang Y."/>
            <person name="Liu X."/>
            <person name="Han W."/>
            <person name="Peng X."/>
            <person name="Liu R."/>
            <person name="Wang L."/>
        </authorList>
    </citation>
    <scope>NUCLEOTIDE SEQUENCE [LARGE SCALE GENOMIC DNA]</scope>
    <source>
        <strain>NG80-2</strain>
    </source>
</reference>
<name>DCUP_GEOTN</name>
<evidence type="ECO:0000255" key="1">
    <source>
        <dbReference type="HAMAP-Rule" id="MF_00218"/>
    </source>
</evidence>
<keyword id="KW-0963">Cytoplasm</keyword>
<keyword id="KW-0210">Decarboxylase</keyword>
<keyword id="KW-0456">Lyase</keyword>
<keyword id="KW-0627">Porphyrin biosynthesis</keyword>
<comment type="function">
    <text evidence="1">Catalyzes the decarboxylation of four acetate groups of uroporphyrinogen-III to yield coproporphyrinogen-III.</text>
</comment>
<comment type="catalytic activity">
    <reaction evidence="1">
        <text>uroporphyrinogen III + 4 H(+) = coproporphyrinogen III + 4 CO2</text>
        <dbReference type="Rhea" id="RHEA:19865"/>
        <dbReference type="ChEBI" id="CHEBI:15378"/>
        <dbReference type="ChEBI" id="CHEBI:16526"/>
        <dbReference type="ChEBI" id="CHEBI:57308"/>
        <dbReference type="ChEBI" id="CHEBI:57309"/>
        <dbReference type="EC" id="4.1.1.37"/>
    </reaction>
</comment>
<comment type="pathway">
    <text evidence="1">Porphyrin-containing compound metabolism; protoporphyrin-IX biosynthesis; coproporphyrinogen-III from 5-aminolevulinate: step 4/4.</text>
</comment>
<comment type="subunit">
    <text evidence="1">Homodimer.</text>
</comment>
<comment type="subcellular location">
    <subcellularLocation>
        <location evidence="1">Cytoplasm</location>
    </subcellularLocation>
</comment>
<comment type="similarity">
    <text evidence="1">Belongs to the uroporphyrinogen decarboxylase family.</text>
</comment>